<name>CP2CG_RABIT</name>
<sequence length="487" mass="55542">MDPVVVLVLGLCCLLLLSHWKQNSGRGKLPPGPTPFPIIGNILQIDAKDISKSLTKFSERYGPVFTVYLGMKPAVVLHGYQAVKEALVDLGEEFAGRGSFPMLDKVSKGLGIVFTNGKRWKEIRRFSLMTLRNFGMGKRSIEDRVQEEARCLVEELRKTNASPCDPTFILGCAPCNVICSIIFHNRFDYKDEEFLKLLEKFNENVRILSSPWLQVCNNFPALIDYLPGSHKTLLKNSDYVKNFIMEKVKEHQKFLDVNNPRDFIDCFLIKMEQENHLEFTLESLVTTVFDLFGAGTETTSTTLRYSLLLLLKHPEVADKVQEEIERVIGRHRSPCMQDRSRMPYTDAVIHEIQRFIDLVPNNLPHTVTRDIKFRNYFIPKGTDIMTSLTSVLHDEKAFPNPKVFDPGHFLDESGNFKKSDYFMPFSAGKRICVGEALARMELFLFLTSILQNFKLQSLVEPKDLDITAVLNGFVSVPPSFQLCFIPV</sequence>
<dbReference type="EC" id="1.14.14.1"/>
<dbReference type="EMBL" id="M29661">
    <property type="protein sequence ID" value="AAA31227.1"/>
    <property type="molecule type" value="mRNA"/>
</dbReference>
<dbReference type="EMBL" id="M29968">
    <property type="protein sequence ID" value="AAA31226.1"/>
    <property type="molecule type" value="mRNA"/>
</dbReference>
<dbReference type="EMBL" id="M18376">
    <property type="protein sequence ID" value="AAA31215.1"/>
    <property type="molecule type" value="mRNA"/>
</dbReference>
<dbReference type="PIR" id="S12765">
    <property type="entry name" value="O4RBC6"/>
</dbReference>
<dbReference type="RefSeq" id="NP_001164593.1">
    <property type="nucleotide sequence ID" value="NM_001171122.1"/>
</dbReference>
<dbReference type="SMR" id="P15123"/>
<dbReference type="FunCoup" id="P15123">
    <property type="interactions" value="363"/>
</dbReference>
<dbReference type="PaxDb" id="9986-ENSOCUP00000017976"/>
<dbReference type="GeneID" id="100328938"/>
<dbReference type="KEGG" id="ocu:100328938"/>
<dbReference type="CTD" id="100328938"/>
<dbReference type="eggNOG" id="KOG0156">
    <property type="taxonomic scope" value="Eukaryota"/>
</dbReference>
<dbReference type="HOGENOM" id="CLU_001570_22_3_1"/>
<dbReference type="InParanoid" id="P15123"/>
<dbReference type="OrthoDB" id="1103324at2759"/>
<dbReference type="Proteomes" id="UP000001811">
    <property type="component" value="Unplaced"/>
</dbReference>
<dbReference type="GO" id="GO:0005789">
    <property type="term" value="C:endoplasmic reticulum membrane"/>
    <property type="evidence" value="ECO:0007669"/>
    <property type="project" value="UniProtKB-SubCell"/>
</dbReference>
<dbReference type="GO" id="GO:0020037">
    <property type="term" value="F:heme binding"/>
    <property type="evidence" value="ECO:0007669"/>
    <property type="project" value="InterPro"/>
</dbReference>
<dbReference type="GO" id="GO:0005506">
    <property type="term" value="F:iron ion binding"/>
    <property type="evidence" value="ECO:0007669"/>
    <property type="project" value="InterPro"/>
</dbReference>
<dbReference type="GO" id="GO:0016712">
    <property type="term" value="F:oxidoreductase activity, acting on paired donors, with incorporation or reduction of molecular oxygen, reduced flavin or flavoprotein as one donor, and incorporation of one atom of oxygen"/>
    <property type="evidence" value="ECO:0007669"/>
    <property type="project" value="UniProtKB-EC"/>
</dbReference>
<dbReference type="GO" id="GO:0006082">
    <property type="term" value="P:organic acid metabolic process"/>
    <property type="evidence" value="ECO:0007669"/>
    <property type="project" value="TreeGrafter"/>
</dbReference>
<dbReference type="GO" id="GO:0006805">
    <property type="term" value="P:xenobiotic metabolic process"/>
    <property type="evidence" value="ECO:0007669"/>
    <property type="project" value="TreeGrafter"/>
</dbReference>
<dbReference type="CDD" id="cd20665">
    <property type="entry name" value="CYP2C-like"/>
    <property type="match status" value="1"/>
</dbReference>
<dbReference type="FunFam" id="1.10.630.10:FF:000299">
    <property type="entry name" value="Cytochrome P450 2C9"/>
    <property type="match status" value="1"/>
</dbReference>
<dbReference type="Gene3D" id="1.10.630.10">
    <property type="entry name" value="Cytochrome P450"/>
    <property type="match status" value="1"/>
</dbReference>
<dbReference type="InterPro" id="IPR001128">
    <property type="entry name" value="Cyt_P450"/>
</dbReference>
<dbReference type="InterPro" id="IPR017972">
    <property type="entry name" value="Cyt_P450_CS"/>
</dbReference>
<dbReference type="InterPro" id="IPR002401">
    <property type="entry name" value="Cyt_P450_E_grp-I"/>
</dbReference>
<dbReference type="InterPro" id="IPR036396">
    <property type="entry name" value="Cyt_P450_sf"/>
</dbReference>
<dbReference type="InterPro" id="IPR050182">
    <property type="entry name" value="Cytochrome_P450_fam2"/>
</dbReference>
<dbReference type="PANTHER" id="PTHR24300:SF400">
    <property type="entry name" value="CYTOCHROME P450 2C9"/>
    <property type="match status" value="1"/>
</dbReference>
<dbReference type="PANTHER" id="PTHR24300">
    <property type="entry name" value="CYTOCHROME P450 508A4-RELATED"/>
    <property type="match status" value="1"/>
</dbReference>
<dbReference type="Pfam" id="PF00067">
    <property type="entry name" value="p450"/>
    <property type="match status" value="1"/>
</dbReference>
<dbReference type="PRINTS" id="PR00463">
    <property type="entry name" value="EP450I"/>
</dbReference>
<dbReference type="PRINTS" id="PR00385">
    <property type="entry name" value="P450"/>
</dbReference>
<dbReference type="SUPFAM" id="SSF48264">
    <property type="entry name" value="Cytochrome P450"/>
    <property type="match status" value="1"/>
</dbReference>
<dbReference type="PROSITE" id="PS00086">
    <property type="entry name" value="CYTOCHROME_P450"/>
    <property type="match status" value="1"/>
</dbReference>
<gene>
    <name type="primary">CYP2C16</name>
</gene>
<comment type="function">
    <text>Cytochromes P450 are a group of heme-thiolate monooxygenases. In liver microsomes, this enzyme is involved in an NADPH-dependent electron transport pathway. It oxidizes a variety of structurally unrelated compounds, including steroids, fatty acids, and xenobiotics.</text>
</comment>
<comment type="catalytic activity">
    <reaction>
        <text>an organic molecule + reduced [NADPH--hemoprotein reductase] + O2 = an alcohol + oxidized [NADPH--hemoprotein reductase] + H2O + H(+)</text>
        <dbReference type="Rhea" id="RHEA:17149"/>
        <dbReference type="Rhea" id="RHEA-COMP:11964"/>
        <dbReference type="Rhea" id="RHEA-COMP:11965"/>
        <dbReference type="ChEBI" id="CHEBI:15377"/>
        <dbReference type="ChEBI" id="CHEBI:15378"/>
        <dbReference type="ChEBI" id="CHEBI:15379"/>
        <dbReference type="ChEBI" id="CHEBI:30879"/>
        <dbReference type="ChEBI" id="CHEBI:57618"/>
        <dbReference type="ChEBI" id="CHEBI:58210"/>
        <dbReference type="ChEBI" id="CHEBI:142491"/>
        <dbReference type="EC" id="1.14.14.1"/>
    </reaction>
</comment>
<comment type="cofactor">
    <cofactor evidence="1">
        <name>heme</name>
        <dbReference type="ChEBI" id="CHEBI:30413"/>
    </cofactor>
</comment>
<comment type="subcellular location">
    <subcellularLocation>
        <location>Endoplasmic reticulum membrane</location>
        <topology>Peripheral membrane protein</topology>
    </subcellularLocation>
    <subcellularLocation>
        <location>Microsome membrane</location>
        <topology>Peripheral membrane protein</topology>
    </subcellularLocation>
</comment>
<comment type="tissue specificity">
    <text>Expressed constitutively in liver, lung, testes, and kidney.</text>
</comment>
<comment type="induction">
    <text>By phenobarbital in each tissue with the exception of the kidney.</text>
</comment>
<comment type="similarity">
    <text evidence="2">Belongs to the cytochrome P450 family.</text>
</comment>
<evidence type="ECO:0000250" key="1"/>
<evidence type="ECO:0000305" key="2"/>
<protein>
    <recommendedName>
        <fullName>Cytochrome P450 2C16</fullName>
        <ecNumber>1.14.14.1</ecNumber>
    </recommendedName>
    <alternativeName>
        <fullName>CYPIIC16</fullName>
    </alternativeName>
</protein>
<accession>P15123</accession>
<reference key="1">
    <citation type="journal article" date="1990" name="Nucleic Acids Res.">
        <title>Sequence and gene expression of rabbit cytochrome P450 IIC16: comparison to highly related family members.</title>
        <authorList>
            <person name="Hassett C."/>
            <person name="Omiecinski C.J."/>
        </authorList>
    </citation>
    <scope>NUCLEOTIDE SEQUENCE [MRNA]</scope>
</reference>
<reference key="2">
    <citation type="journal article" date="1987" name="Biochem. Biophys. Res. Commun.">
        <title>Use of a conserved consensus oligomer in the identification of cytochrome P-450 mRNAs.</title>
        <authorList>
            <person name="Hassett C."/>
            <person name="Omiecinski C.J."/>
        </authorList>
    </citation>
    <scope>NUCLEOTIDE SEQUENCE [MRNA] OF 414-487</scope>
</reference>
<keyword id="KW-0256">Endoplasmic reticulum</keyword>
<keyword id="KW-0349">Heme</keyword>
<keyword id="KW-0408">Iron</keyword>
<keyword id="KW-0472">Membrane</keyword>
<keyword id="KW-0479">Metal-binding</keyword>
<keyword id="KW-0492">Microsome</keyword>
<keyword id="KW-0503">Monooxygenase</keyword>
<keyword id="KW-0560">Oxidoreductase</keyword>
<keyword id="KW-1185">Reference proteome</keyword>
<organism>
    <name type="scientific">Oryctolagus cuniculus</name>
    <name type="common">Rabbit</name>
    <dbReference type="NCBI Taxonomy" id="9986"/>
    <lineage>
        <taxon>Eukaryota</taxon>
        <taxon>Metazoa</taxon>
        <taxon>Chordata</taxon>
        <taxon>Craniata</taxon>
        <taxon>Vertebrata</taxon>
        <taxon>Euteleostomi</taxon>
        <taxon>Mammalia</taxon>
        <taxon>Eutheria</taxon>
        <taxon>Euarchontoglires</taxon>
        <taxon>Glires</taxon>
        <taxon>Lagomorpha</taxon>
        <taxon>Leporidae</taxon>
        <taxon>Oryctolagus</taxon>
    </lineage>
</organism>
<proteinExistence type="evidence at transcript level"/>
<feature type="chain" id="PRO_0000051706" description="Cytochrome P450 2C16">
    <location>
        <begin position="1"/>
        <end position="487"/>
    </location>
</feature>
<feature type="binding site" description="axial binding residue">
    <location>
        <position position="432"/>
    </location>
    <ligand>
        <name>heme</name>
        <dbReference type="ChEBI" id="CHEBI:30413"/>
    </ligand>
    <ligandPart>
        <name>Fe</name>
        <dbReference type="ChEBI" id="CHEBI:18248"/>
    </ligandPart>
</feature>